<sequence length="471" mass="52944">MIKVSLISLGCAKNLVDSEIMVGHLHQAGMAVIPEAEKADVVIVNTCSFIDSSKEESIGHILEVHQHRGLRKRRKEQKLIVAGCMSQRFSKDLSSSLHDEVDAFIGLDQVTKVAPIIQEIYARERTKTDDPVSFVEGRSTFIPDYDTPRFRLTPKHFAYVKIAEGCNHPCTFCIIPQIRGRHRSRTVESVVAEVRQLVREGVKEINLISQDTTFFGMDTWEQRPNPRTPVDSGRGTALTTLLRQLNAIEGDFWIRLLYTHPAHWSDELIRTIAECPKVARYIDIPLQHISDAMLSRMQRETSGGYIRDLIARIRAGIPGIAVRTTFIVGFPGETDADVDELCAFISETKFERLGVFRYSQEDGTRAAKMPEQLSAKTKEARWHRTMALQKQIAADVSKTYVGRTLRVLVEEPGVARGEADAPDIDGRVYVPRELPVGEFADVTVTGYHDYDLLALPPGQKPAQWKVARQAQ</sequence>
<organism>
    <name type="scientific">Opitutus terrae (strain DSM 11246 / JCM 15787 / PB90-1)</name>
    <dbReference type="NCBI Taxonomy" id="452637"/>
    <lineage>
        <taxon>Bacteria</taxon>
        <taxon>Pseudomonadati</taxon>
        <taxon>Verrucomicrobiota</taxon>
        <taxon>Opitutia</taxon>
        <taxon>Opitutales</taxon>
        <taxon>Opitutaceae</taxon>
        <taxon>Opitutus</taxon>
    </lineage>
</organism>
<feature type="chain" id="PRO_0000374910" description="Ribosomal protein uS12 methylthiotransferase RimO">
    <location>
        <begin position="1"/>
        <end position="471"/>
    </location>
</feature>
<feature type="domain" description="MTTase N-terminal" evidence="1">
    <location>
        <begin position="2"/>
        <end position="122"/>
    </location>
</feature>
<feature type="domain" description="Radical SAM core" evidence="2">
    <location>
        <begin position="152"/>
        <end position="395"/>
    </location>
</feature>
<feature type="domain" description="TRAM" evidence="1">
    <location>
        <begin position="398"/>
        <end position="458"/>
    </location>
</feature>
<feature type="binding site" evidence="1">
    <location>
        <position position="11"/>
    </location>
    <ligand>
        <name>[4Fe-4S] cluster</name>
        <dbReference type="ChEBI" id="CHEBI:49883"/>
        <label>1</label>
    </ligand>
</feature>
<feature type="binding site" evidence="1">
    <location>
        <position position="47"/>
    </location>
    <ligand>
        <name>[4Fe-4S] cluster</name>
        <dbReference type="ChEBI" id="CHEBI:49883"/>
        <label>1</label>
    </ligand>
</feature>
<feature type="binding site" evidence="1">
    <location>
        <position position="84"/>
    </location>
    <ligand>
        <name>[4Fe-4S] cluster</name>
        <dbReference type="ChEBI" id="CHEBI:49883"/>
        <label>1</label>
    </ligand>
</feature>
<feature type="binding site" evidence="1">
    <location>
        <position position="166"/>
    </location>
    <ligand>
        <name>[4Fe-4S] cluster</name>
        <dbReference type="ChEBI" id="CHEBI:49883"/>
        <label>2</label>
        <note>4Fe-4S-S-AdoMet</note>
    </ligand>
</feature>
<feature type="binding site" evidence="1">
    <location>
        <position position="170"/>
    </location>
    <ligand>
        <name>[4Fe-4S] cluster</name>
        <dbReference type="ChEBI" id="CHEBI:49883"/>
        <label>2</label>
        <note>4Fe-4S-S-AdoMet</note>
    </ligand>
</feature>
<feature type="binding site" evidence="1">
    <location>
        <position position="173"/>
    </location>
    <ligand>
        <name>[4Fe-4S] cluster</name>
        <dbReference type="ChEBI" id="CHEBI:49883"/>
        <label>2</label>
        <note>4Fe-4S-S-AdoMet</note>
    </ligand>
</feature>
<comment type="function">
    <text evidence="1">Catalyzes the methylthiolation of an aspartic acid residue of ribosomal protein uS12.</text>
</comment>
<comment type="catalytic activity">
    <reaction evidence="1">
        <text>L-aspartate(89)-[ribosomal protein uS12]-hydrogen + (sulfur carrier)-SH + AH2 + 2 S-adenosyl-L-methionine = 3-methylsulfanyl-L-aspartate(89)-[ribosomal protein uS12]-hydrogen + (sulfur carrier)-H + 5'-deoxyadenosine + L-methionine + A + S-adenosyl-L-homocysteine + 2 H(+)</text>
        <dbReference type="Rhea" id="RHEA:37087"/>
        <dbReference type="Rhea" id="RHEA-COMP:10460"/>
        <dbReference type="Rhea" id="RHEA-COMP:10461"/>
        <dbReference type="Rhea" id="RHEA-COMP:14737"/>
        <dbReference type="Rhea" id="RHEA-COMP:14739"/>
        <dbReference type="ChEBI" id="CHEBI:13193"/>
        <dbReference type="ChEBI" id="CHEBI:15378"/>
        <dbReference type="ChEBI" id="CHEBI:17319"/>
        <dbReference type="ChEBI" id="CHEBI:17499"/>
        <dbReference type="ChEBI" id="CHEBI:29917"/>
        <dbReference type="ChEBI" id="CHEBI:29961"/>
        <dbReference type="ChEBI" id="CHEBI:57844"/>
        <dbReference type="ChEBI" id="CHEBI:57856"/>
        <dbReference type="ChEBI" id="CHEBI:59789"/>
        <dbReference type="ChEBI" id="CHEBI:64428"/>
        <dbReference type="ChEBI" id="CHEBI:73599"/>
        <dbReference type="EC" id="2.8.4.4"/>
    </reaction>
</comment>
<comment type="cofactor">
    <cofactor evidence="1">
        <name>[4Fe-4S] cluster</name>
        <dbReference type="ChEBI" id="CHEBI:49883"/>
    </cofactor>
    <text evidence="1">Binds 2 [4Fe-4S] clusters. One cluster is coordinated with 3 cysteines and an exchangeable S-adenosyl-L-methionine.</text>
</comment>
<comment type="subcellular location">
    <subcellularLocation>
        <location evidence="1">Cytoplasm</location>
    </subcellularLocation>
</comment>
<comment type="similarity">
    <text evidence="1">Belongs to the methylthiotransferase family. RimO subfamily.</text>
</comment>
<protein>
    <recommendedName>
        <fullName evidence="1">Ribosomal protein uS12 methylthiotransferase RimO</fullName>
        <shortName evidence="1">uS12 MTTase</shortName>
        <shortName evidence="1">uS12 methylthiotransferase</shortName>
        <ecNumber evidence="1">2.8.4.4</ecNumber>
    </recommendedName>
    <alternativeName>
        <fullName evidence="1">Ribosomal protein uS12 (aspartate-C(3))-methylthiotransferase</fullName>
    </alternativeName>
    <alternativeName>
        <fullName evidence="1">Ribosome maturation factor RimO</fullName>
    </alternativeName>
</protein>
<accession>B1ZW93</accession>
<keyword id="KW-0004">4Fe-4S</keyword>
<keyword id="KW-0963">Cytoplasm</keyword>
<keyword id="KW-0408">Iron</keyword>
<keyword id="KW-0411">Iron-sulfur</keyword>
<keyword id="KW-0479">Metal-binding</keyword>
<keyword id="KW-1185">Reference proteome</keyword>
<keyword id="KW-0949">S-adenosyl-L-methionine</keyword>
<keyword id="KW-0808">Transferase</keyword>
<proteinExistence type="inferred from homology"/>
<evidence type="ECO:0000255" key="1">
    <source>
        <dbReference type="HAMAP-Rule" id="MF_01865"/>
    </source>
</evidence>
<evidence type="ECO:0000255" key="2">
    <source>
        <dbReference type="PROSITE-ProRule" id="PRU01266"/>
    </source>
</evidence>
<gene>
    <name evidence="1" type="primary">rimO</name>
    <name type="ordered locus">Oter_3568</name>
</gene>
<dbReference type="EC" id="2.8.4.4" evidence="1"/>
<dbReference type="EMBL" id="CP001032">
    <property type="protein sequence ID" value="ACB76845.1"/>
    <property type="molecule type" value="Genomic_DNA"/>
</dbReference>
<dbReference type="RefSeq" id="WP_012376374.1">
    <property type="nucleotide sequence ID" value="NC_010571.1"/>
</dbReference>
<dbReference type="SMR" id="B1ZW93"/>
<dbReference type="STRING" id="452637.Oter_3568"/>
<dbReference type="KEGG" id="ote:Oter_3568"/>
<dbReference type="eggNOG" id="COG0621">
    <property type="taxonomic scope" value="Bacteria"/>
</dbReference>
<dbReference type="HOGENOM" id="CLU_018697_0_1_0"/>
<dbReference type="OrthoDB" id="9805215at2"/>
<dbReference type="Proteomes" id="UP000007013">
    <property type="component" value="Chromosome"/>
</dbReference>
<dbReference type="GO" id="GO:0005829">
    <property type="term" value="C:cytosol"/>
    <property type="evidence" value="ECO:0007669"/>
    <property type="project" value="TreeGrafter"/>
</dbReference>
<dbReference type="GO" id="GO:0051539">
    <property type="term" value="F:4 iron, 4 sulfur cluster binding"/>
    <property type="evidence" value="ECO:0007669"/>
    <property type="project" value="UniProtKB-UniRule"/>
</dbReference>
<dbReference type="GO" id="GO:0035599">
    <property type="term" value="F:aspartic acid methylthiotransferase activity"/>
    <property type="evidence" value="ECO:0007669"/>
    <property type="project" value="TreeGrafter"/>
</dbReference>
<dbReference type="GO" id="GO:0046872">
    <property type="term" value="F:metal ion binding"/>
    <property type="evidence" value="ECO:0007669"/>
    <property type="project" value="UniProtKB-KW"/>
</dbReference>
<dbReference type="GO" id="GO:0103039">
    <property type="term" value="F:protein methylthiotransferase activity"/>
    <property type="evidence" value="ECO:0007669"/>
    <property type="project" value="UniProtKB-EC"/>
</dbReference>
<dbReference type="GO" id="GO:0006400">
    <property type="term" value="P:tRNA modification"/>
    <property type="evidence" value="ECO:0007669"/>
    <property type="project" value="InterPro"/>
</dbReference>
<dbReference type="CDD" id="cd01335">
    <property type="entry name" value="Radical_SAM"/>
    <property type="match status" value="1"/>
</dbReference>
<dbReference type="FunFam" id="3.80.30.20:FF:000001">
    <property type="entry name" value="tRNA-2-methylthio-N(6)-dimethylallyladenosine synthase 2"/>
    <property type="match status" value="1"/>
</dbReference>
<dbReference type="Gene3D" id="3.40.50.12160">
    <property type="entry name" value="Methylthiotransferase, N-terminal domain"/>
    <property type="match status" value="1"/>
</dbReference>
<dbReference type="Gene3D" id="2.40.50.140">
    <property type="entry name" value="Nucleic acid-binding proteins"/>
    <property type="match status" value="1"/>
</dbReference>
<dbReference type="Gene3D" id="3.80.30.20">
    <property type="entry name" value="tm_1862 like domain"/>
    <property type="match status" value="1"/>
</dbReference>
<dbReference type="HAMAP" id="MF_01865">
    <property type="entry name" value="MTTase_RimO"/>
    <property type="match status" value="1"/>
</dbReference>
<dbReference type="InterPro" id="IPR006638">
    <property type="entry name" value="Elp3/MiaA/NifB-like_rSAM"/>
</dbReference>
<dbReference type="InterPro" id="IPR005839">
    <property type="entry name" value="Methylthiotransferase"/>
</dbReference>
<dbReference type="InterPro" id="IPR020612">
    <property type="entry name" value="Methylthiotransferase_CS"/>
</dbReference>
<dbReference type="InterPro" id="IPR013848">
    <property type="entry name" value="Methylthiotransferase_N"/>
</dbReference>
<dbReference type="InterPro" id="IPR038135">
    <property type="entry name" value="Methylthiotransferase_N_sf"/>
</dbReference>
<dbReference type="InterPro" id="IPR012340">
    <property type="entry name" value="NA-bd_OB-fold"/>
</dbReference>
<dbReference type="InterPro" id="IPR005840">
    <property type="entry name" value="Ribosomal_uS12_MeSTrfase_RimO"/>
</dbReference>
<dbReference type="InterPro" id="IPR007197">
    <property type="entry name" value="rSAM"/>
</dbReference>
<dbReference type="InterPro" id="IPR023404">
    <property type="entry name" value="rSAM_horseshoe"/>
</dbReference>
<dbReference type="InterPro" id="IPR002792">
    <property type="entry name" value="TRAM_dom"/>
</dbReference>
<dbReference type="NCBIfam" id="TIGR01125">
    <property type="entry name" value="30S ribosomal protein S12 methylthiotransferase RimO"/>
    <property type="match status" value="1"/>
</dbReference>
<dbReference type="NCBIfam" id="TIGR00089">
    <property type="entry name" value="MiaB/RimO family radical SAM methylthiotransferase"/>
    <property type="match status" value="1"/>
</dbReference>
<dbReference type="PANTHER" id="PTHR43837">
    <property type="entry name" value="RIBOSOMAL PROTEIN S12 METHYLTHIOTRANSFERASE RIMO"/>
    <property type="match status" value="1"/>
</dbReference>
<dbReference type="PANTHER" id="PTHR43837:SF1">
    <property type="entry name" value="RIBOSOMAL PROTEIN US12 METHYLTHIOTRANSFERASE RIMO"/>
    <property type="match status" value="1"/>
</dbReference>
<dbReference type="Pfam" id="PF04055">
    <property type="entry name" value="Radical_SAM"/>
    <property type="match status" value="1"/>
</dbReference>
<dbReference type="Pfam" id="PF18693">
    <property type="entry name" value="TRAM_2"/>
    <property type="match status" value="1"/>
</dbReference>
<dbReference type="Pfam" id="PF00919">
    <property type="entry name" value="UPF0004"/>
    <property type="match status" value="1"/>
</dbReference>
<dbReference type="SFLD" id="SFLDG01082">
    <property type="entry name" value="B12-binding_domain_containing"/>
    <property type="match status" value="1"/>
</dbReference>
<dbReference type="SFLD" id="SFLDS00029">
    <property type="entry name" value="Radical_SAM"/>
    <property type="match status" value="1"/>
</dbReference>
<dbReference type="SFLD" id="SFLDF00274">
    <property type="entry name" value="ribosomal_protein_S12_methylth"/>
    <property type="match status" value="1"/>
</dbReference>
<dbReference type="SMART" id="SM00729">
    <property type="entry name" value="Elp3"/>
    <property type="match status" value="1"/>
</dbReference>
<dbReference type="SUPFAM" id="SSF102114">
    <property type="entry name" value="Radical SAM enzymes"/>
    <property type="match status" value="1"/>
</dbReference>
<dbReference type="PROSITE" id="PS51449">
    <property type="entry name" value="MTTASE_N"/>
    <property type="match status" value="1"/>
</dbReference>
<dbReference type="PROSITE" id="PS01278">
    <property type="entry name" value="MTTASE_RADICAL"/>
    <property type="match status" value="1"/>
</dbReference>
<dbReference type="PROSITE" id="PS51918">
    <property type="entry name" value="RADICAL_SAM"/>
    <property type="match status" value="1"/>
</dbReference>
<dbReference type="PROSITE" id="PS50926">
    <property type="entry name" value="TRAM"/>
    <property type="match status" value="1"/>
</dbReference>
<name>RIMO_OPITP</name>
<reference key="1">
    <citation type="journal article" date="2011" name="J. Bacteriol.">
        <title>Genome sequence of the verrucomicrobium Opitutus terrae PB90-1, an abundant inhabitant of rice paddy soil ecosystems.</title>
        <authorList>
            <person name="van Passel M.W."/>
            <person name="Kant R."/>
            <person name="Palva A."/>
            <person name="Copeland A."/>
            <person name="Lucas S."/>
            <person name="Lapidus A."/>
            <person name="Glavina del Rio T."/>
            <person name="Pitluck S."/>
            <person name="Goltsman E."/>
            <person name="Clum A."/>
            <person name="Sun H."/>
            <person name="Schmutz J."/>
            <person name="Larimer F.W."/>
            <person name="Land M.L."/>
            <person name="Hauser L."/>
            <person name="Kyrpides N."/>
            <person name="Mikhailova N."/>
            <person name="Richardson P.P."/>
            <person name="Janssen P.H."/>
            <person name="de Vos W.M."/>
            <person name="Smidt H."/>
        </authorList>
    </citation>
    <scope>NUCLEOTIDE SEQUENCE [LARGE SCALE GENOMIC DNA]</scope>
    <source>
        <strain>DSM 11246 / JCM 15787 / PB90-1</strain>
    </source>
</reference>